<comment type="catalytic activity">
    <reaction evidence="1">
        <text>tRNA(Arg) + L-arginine + ATP = L-arginyl-tRNA(Arg) + AMP + diphosphate</text>
        <dbReference type="Rhea" id="RHEA:20301"/>
        <dbReference type="Rhea" id="RHEA-COMP:9658"/>
        <dbReference type="Rhea" id="RHEA-COMP:9673"/>
        <dbReference type="ChEBI" id="CHEBI:30616"/>
        <dbReference type="ChEBI" id="CHEBI:32682"/>
        <dbReference type="ChEBI" id="CHEBI:33019"/>
        <dbReference type="ChEBI" id="CHEBI:78442"/>
        <dbReference type="ChEBI" id="CHEBI:78513"/>
        <dbReference type="ChEBI" id="CHEBI:456215"/>
        <dbReference type="EC" id="6.1.1.19"/>
    </reaction>
</comment>
<comment type="subunit">
    <text evidence="1">Monomer.</text>
</comment>
<comment type="subcellular location">
    <subcellularLocation>
        <location evidence="1">Cytoplasm</location>
    </subcellularLocation>
</comment>
<comment type="similarity">
    <text evidence="1">Belongs to the class-I aminoacyl-tRNA synthetase family.</text>
</comment>
<accession>A5N8F9</accession>
<keyword id="KW-0030">Aminoacyl-tRNA synthetase</keyword>
<keyword id="KW-0067">ATP-binding</keyword>
<keyword id="KW-0963">Cytoplasm</keyword>
<keyword id="KW-0436">Ligase</keyword>
<keyword id="KW-0547">Nucleotide-binding</keyword>
<keyword id="KW-0648">Protein biosynthesis</keyword>
<keyword id="KW-1185">Reference proteome</keyword>
<proteinExistence type="inferred from homology"/>
<protein>
    <recommendedName>
        <fullName evidence="1">Arginine--tRNA ligase</fullName>
        <ecNumber evidence="1">6.1.1.19</ecNumber>
    </recommendedName>
    <alternativeName>
        <fullName evidence="1">Arginyl-tRNA synthetase</fullName>
        <shortName evidence="1">ArgRS</shortName>
    </alternativeName>
</protein>
<dbReference type="EC" id="6.1.1.19" evidence="1"/>
<dbReference type="EMBL" id="CP000673">
    <property type="protein sequence ID" value="EDK33590.1"/>
    <property type="molecule type" value="Genomic_DNA"/>
</dbReference>
<dbReference type="RefSeq" id="WP_012101940.1">
    <property type="nucleotide sequence ID" value="NC_009706.1"/>
</dbReference>
<dbReference type="SMR" id="A5N8F9"/>
<dbReference type="STRING" id="431943.CKL_1548"/>
<dbReference type="KEGG" id="ckl:CKL_1548"/>
<dbReference type="eggNOG" id="COG0018">
    <property type="taxonomic scope" value="Bacteria"/>
</dbReference>
<dbReference type="HOGENOM" id="CLU_006406_6_1_9"/>
<dbReference type="Proteomes" id="UP000002411">
    <property type="component" value="Chromosome"/>
</dbReference>
<dbReference type="GO" id="GO:0005737">
    <property type="term" value="C:cytoplasm"/>
    <property type="evidence" value="ECO:0007669"/>
    <property type="project" value="UniProtKB-SubCell"/>
</dbReference>
<dbReference type="GO" id="GO:0004814">
    <property type="term" value="F:arginine-tRNA ligase activity"/>
    <property type="evidence" value="ECO:0007669"/>
    <property type="project" value="UniProtKB-UniRule"/>
</dbReference>
<dbReference type="GO" id="GO:0005524">
    <property type="term" value="F:ATP binding"/>
    <property type="evidence" value="ECO:0007669"/>
    <property type="project" value="UniProtKB-UniRule"/>
</dbReference>
<dbReference type="GO" id="GO:0006420">
    <property type="term" value="P:arginyl-tRNA aminoacylation"/>
    <property type="evidence" value="ECO:0007669"/>
    <property type="project" value="UniProtKB-UniRule"/>
</dbReference>
<dbReference type="CDD" id="cd07956">
    <property type="entry name" value="Anticodon_Ia_Arg"/>
    <property type="match status" value="1"/>
</dbReference>
<dbReference type="CDD" id="cd00671">
    <property type="entry name" value="ArgRS_core"/>
    <property type="match status" value="1"/>
</dbReference>
<dbReference type="FunFam" id="1.10.730.10:FF:000008">
    <property type="entry name" value="Arginine--tRNA ligase"/>
    <property type="match status" value="1"/>
</dbReference>
<dbReference type="FunFam" id="3.40.50.620:FF:000116">
    <property type="entry name" value="Arginine--tRNA ligase"/>
    <property type="match status" value="1"/>
</dbReference>
<dbReference type="Gene3D" id="3.30.1360.70">
    <property type="entry name" value="Arginyl tRNA synthetase N-terminal domain"/>
    <property type="match status" value="1"/>
</dbReference>
<dbReference type="Gene3D" id="3.40.50.620">
    <property type="entry name" value="HUPs"/>
    <property type="match status" value="1"/>
</dbReference>
<dbReference type="Gene3D" id="1.10.730.10">
    <property type="entry name" value="Isoleucyl-tRNA Synthetase, Domain 1"/>
    <property type="match status" value="1"/>
</dbReference>
<dbReference type="HAMAP" id="MF_00123">
    <property type="entry name" value="Arg_tRNA_synth"/>
    <property type="match status" value="1"/>
</dbReference>
<dbReference type="InterPro" id="IPR001412">
    <property type="entry name" value="aa-tRNA-synth_I_CS"/>
</dbReference>
<dbReference type="InterPro" id="IPR001278">
    <property type="entry name" value="Arg-tRNA-ligase"/>
</dbReference>
<dbReference type="InterPro" id="IPR005148">
    <property type="entry name" value="Arg-tRNA-synth_N"/>
</dbReference>
<dbReference type="InterPro" id="IPR036695">
    <property type="entry name" value="Arg-tRNA-synth_N_sf"/>
</dbReference>
<dbReference type="InterPro" id="IPR035684">
    <property type="entry name" value="ArgRS_core"/>
</dbReference>
<dbReference type="InterPro" id="IPR008909">
    <property type="entry name" value="DALR_anticod-bd"/>
</dbReference>
<dbReference type="InterPro" id="IPR014729">
    <property type="entry name" value="Rossmann-like_a/b/a_fold"/>
</dbReference>
<dbReference type="InterPro" id="IPR009080">
    <property type="entry name" value="tRNAsynth_Ia_anticodon-bd"/>
</dbReference>
<dbReference type="NCBIfam" id="TIGR00456">
    <property type="entry name" value="argS"/>
    <property type="match status" value="1"/>
</dbReference>
<dbReference type="PANTHER" id="PTHR11956:SF5">
    <property type="entry name" value="ARGININE--TRNA LIGASE, CYTOPLASMIC"/>
    <property type="match status" value="1"/>
</dbReference>
<dbReference type="PANTHER" id="PTHR11956">
    <property type="entry name" value="ARGINYL-TRNA SYNTHETASE"/>
    <property type="match status" value="1"/>
</dbReference>
<dbReference type="Pfam" id="PF03485">
    <property type="entry name" value="Arg_tRNA_synt_N"/>
    <property type="match status" value="1"/>
</dbReference>
<dbReference type="Pfam" id="PF05746">
    <property type="entry name" value="DALR_1"/>
    <property type="match status" value="1"/>
</dbReference>
<dbReference type="Pfam" id="PF00750">
    <property type="entry name" value="tRNA-synt_1d"/>
    <property type="match status" value="1"/>
</dbReference>
<dbReference type="PRINTS" id="PR01038">
    <property type="entry name" value="TRNASYNTHARG"/>
</dbReference>
<dbReference type="SMART" id="SM01016">
    <property type="entry name" value="Arg_tRNA_synt_N"/>
    <property type="match status" value="1"/>
</dbReference>
<dbReference type="SMART" id="SM00836">
    <property type="entry name" value="DALR_1"/>
    <property type="match status" value="1"/>
</dbReference>
<dbReference type="SUPFAM" id="SSF47323">
    <property type="entry name" value="Anticodon-binding domain of a subclass of class I aminoacyl-tRNA synthetases"/>
    <property type="match status" value="1"/>
</dbReference>
<dbReference type="SUPFAM" id="SSF55190">
    <property type="entry name" value="Arginyl-tRNA synthetase (ArgRS), N-terminal 'additional' domain"/>
    <property type="match status" value="1"/>
</dbReference>
<dbReference type="SUPFAM" id="SSF52374">
    <property type="entry name" value="Nucleotidylyl transferase"/>
    <property type="match status" value="1"/>
</dbReference>
<dbReference type="PROSITE" id="PS00178">
    <property type="entry name" value="AA_TRNA_LIGASE_I"/>
    <property type="match status" value="1"/>
</dbReference>
<gene>
    <name evidence="1" type="primary">argS</name>
    <name type="ordered locus">CKL_1548</name>
</gene>
<evidence type="ECO:0000255" key="1">
    <source>
        <dbReference type="HAMAP-Rule" id="MF_00123"/>
    </source>
</evidence>
<reference key="1">
    <citation type="journal article" date="2008" name="Proc. Natl. Acad. Sci. U.S.A.">
        <title>The genome of Clostridium kluyveri, a strict anaerobe with unique metabolic features.</title>
        <authorList>
            <person name="Seedorf H."/>
            <person name="Fricke W.F."/>
            <person name="Veith B."/>
            <person name="Brueggemann H."/>
            <person name="Liesegang H."/>
            <person name="Strittmatter A."/>
            <person name="Miethke M."/>
            <person name="Buckel W."/>
            <person name="Hinderberger J."/>
            <person name="Li F."/>
            <person name="Hagemeier C."/>
            <person name="Thauer R.K."/>
            <person name="Gottschalk G."/>
        </authorList>
    </citation>
    <scope>NUCLEOTIDE SEQUENCE [LARGE SCALE GENOMIC DNA]</scope>
    <source>
        <strain>ATCC 8527 / DSM 555 / NBRC 12016 / NCIMB 10680 / K1</strain>
    </source>
</reference>
<name>SYR_CLOK5</name>
<sequence length="566" mass="65277">MDFKKLAAEEIKKNIDLELNFIEGLIEVPPKPEMGDYAFPCFQLAKVLKKAPNIISKELKDKLHSKYFEKIENLGPYVNFFVDKKIFTEYTLKEILLKGDSYGSSDMGEGKNVVVEYSSPNIAKPFHVGHLFSTSIGNALYKMINFQGYNCTRINHLGDWGTQFGKLIAAYNRWCNAEELNRDPIKELLRIYVKFHEEAEKDPSLNEEGRMYFKKLEDGSEEEIKLWKKFKDLSLREFKKVYDLLKVDFDSYAGESFYTDKMDAVVEEIDKKGLLVESNGAKVVLLDEYNIPPCIVKKSDGTTIYATRDLAAAIYRKKTYDFYKSIYVVGLDQSLHFKQVFTTLKLMGKDWADSCKHVGFGLVRFANKKLSTRKGDVIFLEELLNKSVERTLEIINEKNPKLENKEEAAKKIGIGAVIFTYLKNNREKDIVFDWNEMLSFEGETGPYVQYSYARGKSILRKSEEASYDENQIDYSKLGSKEEFELVKILENFNKSIINAINRLEPFIVTRYVIDVAKAFNKFYNAHSIMNAADENIKKARLYLVKCTCQVLKNGLNLMGIEVVEKM</sequence>
<organism>
    <name type="scientific">Clostridium kluyveri (strain ATCC 8527 / DSM 555 / NBRC 12016 / NCIMB 10680 / K1)</name>
    <dbReference type="NCBI Taxonomy" id="431943"/>
    <lineage>
        <taxon>Bacteria</taxon>
        <taxon>Bacillati</taxon>
        <taxon>Bacillota</taxon>
        <taxon>Clostridia</taxon>
        <taxon>Eubacteriales</taxon>
        <taxon>Clostridiaceae</taxon>
        <taxon>Clostridium</taxon>
    </lineage>
</organism>
<feature type="chain" id="PRO_1000076210" description="Arginine--tRNA ligase">
    <location>
        <begin position="1"/>
        <end position="566"/>
    </location>
</feature>
<feature type="short sequence motif" description="'HIGH' region">
    <location>
        <begin position="120"/>
        <end position="130"/>
    </location>
</feature>